<dbReference type="EMBL" id="BC079299">
    <property type="protein sequence ID" value="AAH79299.1"/>
    <property type="molecule type" value="mRNA"/>
</dbReference>
<dbReference type="RefSeq" id="NP_001013883.1">
    <property type="nucleotide sequence ID" value="NM_001013861.1"/>
</dbReference>
<dbReference type="FunCoup" id="Q6AXV7">
    <property type="interactions" value="395"/>
</dbReference>
<dbReference type="STRING" id="10116.ENSRNOP00000003892"/>
<dbReference type="GlyCosmos" id="Q6AXV7">
    <property type="glycosylation" value="1 site, No reported glycans"/>
</dbReference>
<dbReference type="GlyGen" id="Q6AXV7">
    <property type="glycosylation" value="1 site"/>
</dbReference>
<dbReference type="PaxDb" id="10116-ENSRNOP00000003892"/>
<dbReference type="Ensembl" id="ENSRNOT00000003892.7">
    <property type="protein sequence ID" value="ENSRNOP00000003892.3"/>
    <property type="gene ID" value="ENSRNOG00000002918.7"/>
</dbReference>
<dbReference type="GeneID" id="287741"/>
<dbReference type="KEGG" id="rno:287741"/>
<dbReference type="UCSC" id="RGD:1307851">
    <property type="organism name" value="rat"/>
</dbReference>
<dbReference type="AGR" id="RGD:1307851"/>
<dbReference type="CTD" id="100528020"/>
<dbReference type="RGD" id="1307851">
    <property type="gene designation" value="RGD1307851"/>
</dbReference>
<dbReference type="eggNOG" id="ENOG502QRCU">
    <property type="taxonomic scope" value="Eukaryota"/>
</dbReference>
<dbReference type="GeneTree" id="ENSGT00530000063991"/>
<dbReference type="HOGENOM" id="CLU_054403_0_0_1"/>
<dbReference type="InParanoid" id="Q6AXV7"/>
<dbReference type="OMA" id="AWDKDST"/>
<dbReference type="OrthoDB" id="9899560at2759"/>
<dbReference type="PhylomeDB" id="Q6AXV7"/>
<dbReference type="TreeFam" id="TF332178"/>
<dbReference type="PRO" id="PR:Q6AXV7"/>
<dbReference type="Proteomes" id="UP000002494">
    <property type="component" value="Chromosome 10"/>
</dbReference>
<dbReference type="Bgee" id="ENSRNOG00000002918">
    <property type="expression patterns" value="Expressed in testis"/>
</dbReference>
<dbReference type="GO" id="GO:0016020">
    <property type="term" value="C:membrane"/>
    <property type="evidence" value="ECO:0007669"/>
    <property type="project" value="UniProtKB-SubCell"/>
</dbReference>
<dbReference type="Gene3D" id="2.60.40.10">
    <property type="entry name" value="Immunoglobulins"/>
    <property type="match status" value="2"/>
</dbReference>
<dbReference type="InterPro" id="IPR039311">
    <property type="entry name" value="FAM187A/B"/>
</dbReference>
<dbReference type="InterPro" id="IPR007110">
    <property type="entry name" value="Ig-like_dom"/>
</dbReference>
<dbReference type="InterPro" id="IPR036179">
    <property type="entry name" value="Ig-like_dom_sf"/>
</dbReference>
<dbReference type="InterPro" id="IPR013783">
    <property type="entry name" value="Ig-like_fold"/>
</dbReference>
<dbReference type="InterPro" id="IPR003599">
    <property type="entry name" value="Ig_sub"/>
</dbReference>
<dbReference type="InterPro" id="IPR013106">
    <property type="entry name" value="Ig_V-set"/>
</dbReference>
<dbReference type="PANTHER" id="PTHR32178">
    <property type="entry name" value="FAM187"/>
    <property type="match status" value="1"/>
</dbReference>
<dbReference type="PANTHER" id="PTHR32178:SF7">
    <property type="entry name" value="IG-LIKE V-TYPE DOMAIN-CONTAINING PROTEIN FAM187A"/>
    <property type="match status" value="1"/>
</dbReference>
<dbReference type="Pfam" id="PF07686">
    <property type="entry name" value="V-set"/>
    <property type="match status" value="1"/>
</dbReference>
<dbReference type="SMART" id="SM00409">
    <property type="entry name" value="IG"/>
    <property type="match status" value="2"/>
</dbReference>
<dbReference type="SUPFAM" id="SSF48726">
    <property type="entry name" value="Immunoglobulin"/>
    <property type="match status" value="2"/>
</dbReference>
<dbReference type="PROSITE" id="PS50835">
    <property type="entry name" value="IG_LIKE"/>
    <property type="match status" value="1"/>
</dbReference>
<proteinExistence type="evidence at transcript level"/>
<keyword id="KW-1015">Disulfide bond</keyword>
<keyword id="KW-0325">Glycoprotein</keyword>
<keyword id="KW-0393">Immunoglobulin domain</keyword>
<keyword id="KW-0472">Membrane</keyword>
<keyword id="KW-1185">Reference proteome</keyword>
<keyword id="KW-0732">Signal</keyword>
<keyword id="KW-0812">Transmembrane</keyword>
<keyword id="KW-1133">Transmembrane helix</keyword>
<organism>
    <name type="scientific">Rattus norvegicus</name>
    <name type="common">Rat</name>
    <dbReference type="NCBI Taxonomy" id="10116"/>
    <lineage>
        <taxon>Eukaryota</taxon>
        <taxon>Metazoa</taxon>
        <taxon>Chordata</taxon>
        <taxon>Craniata</taxon>
        <taxon>Vertebrata</taxon>
        <taxon>Euteleostomi</taxon>
        <taxon>Mammalia</taxon>
        <taxon>Eutheria</taxon>
        <taxon>Euarchontoglires</taxon>
        <taxon>Glires</taxon>
        <taxon>Rodentia</taxon>
        <taxon>Myomorpha</taxon>
        <taxon>Muroidea</taxon>
        <taxon>Muridae</taxon>
        <taxon>Murinae</taxon>
        <taxon>Rattus</taxon>
    </lineage>
</organism>
<evidence type="ECO:0000255" key="1"/>
<evidence type="ECO:0000255" key="2">
    <source>
        <dbReference type="PROSITE-ProRule" id="PRU00114"/>
    </source>
</evidence>
<evidence type="ECO:0000305" key="3"/>
<sequence length="418" mass="47804">MRLAPTTVLLWAWGSLQAFEIVEKENIFQRTPCPAFLVFDNTAYLADMSFELPCHCKPEDVSAVVWYYQKYLGSSHTTVLTDFDGRLLTEAAHVRVGSSMLARFSIRMFSLLVFRAQPEDSGLYFCGTRNGDYFYAYDVDIQSHKGMVASFRDKGQEPLPDEYYGSLHVFTTFWEWTPCDRCGVRGEQWRFGLCYLQNPNLSPRYIKTLPDVVSCGSRAVPWKLHLKTKYHTPELLIQSCLVSCKKNKMGEGILAIYNYVSKLGGRPWVPQVPIQFHQQRLGHGLIISCPGARPEHAVAWDKDSQPLYRTQYLKGVNRSMRVFIDHGNHLHIRFTQLSDRGIYYCWRQGLKIAGFRLGVTSRGRYPASLSDPETRTAVELTLIGYLLIAVVFVTIHLCRCCCQSRCCPNFSAQTLLQL</sequence>
<comment type="subcellular location">
    <subcellularLocation>
        <location evidence="3">Membrane</location>
        <topology evidence="3">Single-pass type I membrane protein</topology>
    </subcellularLocation>
</comment>
<comment type="similarity">
    <text evidence="3">Belongs to the FAM187 family.</text>
</comment>
<gene>
    <name type="primary">Fam187a</name>
</gene>
<reference key="1">
    <citation type="journal article" date="2004" name="Genome Res.">
        <title>The status, quality, and expansion of the NIH full-length cDNA project: the Mammalian Gene Collection (MGC).</title>
        <authorList>
            <consortium name="The MGC Project Team"/>
        </authorList>
    </citation>
    <scope>NUCLEOTIDE SEQUENCE [LARGE SCALE MRNA]</scope>
    <source>
        <tissue>Testis</tissue>
    </source>
</reference>
<feature type="signal peptide" evidence="1">
    <location>
        <begin position="1"/>
        <end position="18"/>
    </location>
</feature>
<feature type="chain" id="PRO_0000340656" description="Ig-like V-type domain-containing protein FAM187A">
    <location>
        <begin position="19"/>
        <end position="418"/>
    </location>
</feature>
<feature type="topological domain" description="Extracellular" evidence="1">
    <location>
        <begin position="19"/>
        <end position="376"/>
    </location>
</feature>
<feature type="transmembrane region" description="Helical" evidence="1">
    <location>
        <begin position="377"/>
        <end position="397"/>
    </location>
</feature>
<feature type="topological domain" description="Cytoplasmic" evidence="1">
    <location>
        <begin position="398"/>
        <end position="418"/>
    </location>
</feature>
<feature type="domain" description="Ig-like V-type">
    <location>
        <begin position="267"/>
        <end position="361"/>
    </location>
</feature>
<feature type="glycosylation site" description="N-linked (GlcNAc...) asparagine" evidence="1">
    <location>
        <position position="317"/>
    </location>
</feature>
<feature type="disulfide bond" evidence="2">
    <location>
        <begin position="289"/>
        <end position="345"/>
    </location>
</feature>
<accession>Q6AXV7</accession>
<name>F187A_RAT</name>
<protein>
    <recommendedName>
        <fullName>Ig-like V-type domain-containing protein FAM187A</fullName>
    </recommendedName>
</protein>